<sequence length="189" mass="21499">MARLCAFLMVLAVLSYWPTCSLGCDLPQTHNLRNKRALTLLVKMRRLSPLSCLKDRKDFGFPQEKVGAQQIQEAQAIPVLTELTQQILTLFTSKDSSAAWNATLLDSFCNDLHQLLNDLQGCLMQQVEIQALPLTQEDSLLAVRTYFHRITVFLREKKHSPCAWEVVRAEVWRALSSSAKLLARLNEDE</sequence>
<organism>
    <name type="scientific">Mus musculus</name>
    <name type="common">Mouse</name>
    <dbReference type="NCBI Taxonomy" id="10090"/>
    <lineage>
        <taxon>Eukaryota</taxon>
        <taxon>Metazoa</taxon>
        <taxon>Chordata</taxon>
        <taxon>Craniata</taxon>
        <taxon>Vertebrata</taxon>
        <taxon>Euteleostomi</taxon>
        <taxon>Mammalia</taxon>
        <taxon>Eutheria</taxon>
        <taxon>Euarchontoglires</taxon>
        <taxon>Glires</taxon>
        <taxon>Rodentia</taxon>
        <taxon>Myomorpha</taxon>
        <taxon>Muroidea</taxon>
        <taxon>Muridae</taxon>
        <taxon>Murinae</taxon>
        <taxon>Mus</taxon>
        <taxon>Mus</taxon>
    </lineage>
</organism>
<keyword id="KW-0051">Antiviral defense</keyword>
<keyword id="KW-0202">Cytokine</keyword>
<keyword id="KW-1015">Disulfide bond</keyword>
<keyword id="KW-0325">Glycoprotein</keyword>
<keyword id="KW-1185">Reference proteome</keyword>
<keyword id="KW-0964">Secreted</keyword>
<keyword id="KW-0732">Signal</keyword>
<accession>P07350</accession>
<accession>B9EKS5</accession>
<accession>P17660</accession>
<gene>
    <name type="primary">Ifna6</name>
    <name type="synonym">Ifa6</name>
    <name type="synonym">Ifa8</name>
    <name type="synonym">Ifna8</name>
</gene>
<comment type="function">
    <text>Produced by macrophages, IFN-alpha have antiviral activities. Interferon stimulates the production of two enzymes: a protein kinase and an oligoadenylate synthetase.</text>
</comment>
<comment type="subcellular location">
    <subcellularLocation>
        <location>Secreted</location>
    </subcellularLocation>
</comment>
<comment type="miscellaneous">
    <text>Not expressed in fibroblasts upon virus induction.</text>
</comment>
<comment type="similarity">
    <text evidence="2">Belongs to the alpha/beta interferon family.</text>
</comment>
<evidence type="ECO:0000250" key="1"/>
<evidence type="ECO:0000305" key="2"/>
<name>IFNA6_MOUSE</name>
<proteinExistence type="evidence at transcript level"/>
<protein>
    <recommendedName>
        <fullName>Interferon alpha-6</fullName>
        <shortName>IFN-alpha-6</shortName>
    </recommendedName>
    <alternativeName>
        <fullName>Interferon alpha-8</fullName>
        <shortName>IFN-alpha-8</shortName>
    </alternativeName>
</protein>
<reference key="1">
    <citation type="journal article" date="1985" name="Nucleic Acids Res.">
        <title>Characterization of a mouse interferon gene locus I. Isolation of a cluster of four alpha interferon genes.</title>
        <authorList>
            <person name="Kelly K.A."/>
            <person name="Pitha P.M."/>
        </authorList>
    </citation>
    <scope>NUCLEOTIDE SEQUENCE [GENOMIC DNA]</scope>
    <source>
        <strain>BALB/cJ</strain>
    </source>
</reference>
<reference key="2">
    <citation type="journal article" date="1989" name="J. Gen. Virol.">
        <title>Isolation and characterization of a functional murine interferon alpha gene which is not expressed in fibroblasts upon virus induction.</title>
        <authorList>
            <person name="Navarro S."/>
            <person name="Dion M."/>
            <person name="Vodjdani G."/>
            <person name="Berlot-Picard F."/>
            <person name="Doly J."/>
        </authorList>
    </citation>
    <scope>NUCLEOTIDE SEQUENCE [GENOMIC DNA]</scope>
</reference>
<reference key="3">
    <citation type="journal article" date="2004" name="Genome Res.">
        <title>The status, quality, and expansion of the NIH full-length cDNA project: the Mammalian Gene Collection (MGC).</title>
        <authorList>
            <consortium name="The MGC Project Team"/>
        </authorList>
    </citation>
    <scope>NUCLEOTIDE SEQUENCE [LARGE SCALE MRNA]</scope>
    <source>
        <tissue>Brain</tissue>
    </source>
</reference>
<dbReference type="EMBL" id="X01972">
    <property type="protein sequence ID" value="CAA26004.1"/>
    <property type="molecule type" value="Genomic_DNA"/>
</dbReference>
<dbReference type="EMBL" id="D00460">
    <property type="protein sequence ID" value="BAA00349.1"/>
    <property type="molecule type" value="Genomic_DNA"/>
</dbReference>
<dbReference type="EMBL" id="BC151087">
    <property type="protein sequence ID" value="AAI51088.1"/>
    <property type="molecule type" value="mRNA"/>
</dbReference>
<dbReference type="PIR" id="D23087">
    <property type="entry name" value="IVMSA6"/>
</dbReference>
<dbReference type="PIR" id="I49773">
    <property type="entry name" value="I49773"/>
</dbReference>
<dbReference type="SMR" id="P07350"/>
<dbReference type="FunCoup" id="P07350">
    <property type="interactions" value="520"/>
</dbReference>
<dbReference type="STRING" id="10090.ENSMUSP00000100777"/>
<dbReference type="GlyCosmos" id="P07350">
    <property type="glycosylation" value="1 site, No reported glycans"/>
</dbReference>
<dbReference type="GlyGen" id="P07350">
    <property type="glycosylation" value="1 site"/>
</dbReference>
<dbReference type="PaxDb" id="10090-ENSMUSP00000100777"/>
<dbReference type="ABCD" id="P07350">
    <property type="antibodies" value="1 sequenced antibody"/>
</dbReference>
<dbReference type="AGR" id="MGI:107662"/>
<dbReference type="MGI" id="MGI:107662">
    <property type="gene designation" value="Ifna6"/>
</dbReference>
<dbReference type="InParanoid" id="P07350"/>
<dbReference type="PhylomeDB" id="P07350"/>
<dbReference type="Reactome" id="R-MMU-909733">
    <property type="pathway name" value="Interferon alpha/beta signaling"/>
</dbReference>
<dbReference type="Reactome" id="R-MMU-912694">
    <property type="pathway name" value="Regulation of IFNA/IFNB signaling"/>
</dbReference>
<dbReference type="ChiTaRS" id="Ifna6">
    <property type="organism name" value="mouse"/>
</dbReference>
<dbReference type="PRO" id="PR:P07350"/>
<dbReference type="Proteomes" id="UP000000589">
    <property type="component" value="Unplaced"/>
</dbReference>
<dbReference type="RNAct" id="P07350">
    <property type="molecule type" value="protein"/>
</dbReference>
<dbReference type="GO" id="GO:0005615">
    <property type="term" value="C:extracellular space"/>
    <property type="evidence" value="ECO:0000314"/>
    <property type="project" value="MGI"/>
</dbReference>
<dbReference type="GO" id="GO:0005125">
    <property type="term" value="F:cytokine activity"/>
    <property type="evidence" value="ECO:0007669"/>
    <property type="project" value="UniProtKB-KW"/>
</dbReference>
<dbReference type="GO" id="GO:0005126">
    <property type="term" value="F:cytokine receptor binding"/>
    <property type="evidence" value="ECO:0007669"/>
    <property type="project" value="InterPro"/>
</dbReference>
<dbReference type="GO" id="GO:0051607">
    <property type="term" value="P:defense response to virus"/>
    <property type="evidence" value="ECO:0000314"/>
    <property type="project" value="MGI"/>
</dbReference>
<dbReference type="CDD" id="cd00095">
    <property type="entry name" value="IFab"/>
    <property type="match status" value="1"/>
</dbReference>
<dbReference type="FunFam" id="1.20.1250.10:FF:000001">
    <property type="entry name" value="Interferon alpha"/>
    <property type="match status" value="1"/>
</dbReference>
<dbReference type="Gene3D" id="1.20.1250.10">
    <property type="match status" value="1"/>
</dbReference>
<dbReference type="InterPro" id="IPR009079">
    <property type="entry name" value="4_helix_cytokine-like_core"/>
</dbReference>
<dbReference type="InterPro" id="IPR000471">
    <property type="entry name" value="Interferon_alpha/beta/delta"/>
</dbReference>
<dbReference type="PANTHER" id="PTHR11691:SF74">
    <property type="entry name" value="ALPHA-INTERFERON-RELATED"/>
    <property type="match status" value="1"/>
</dbReference>
<dbReference type="PANTHER" id="PTHR11691">
    <property type="entry name" value="TYPE I INTERFERON"/>
    <property type="match status" value="1"/>
</dbReference>
<dbReference type="Pfam" id="PF00143">
    <property type="entry name" value="Interferon"/>
    <property type="match status" value="1"/>
</dbReference>
<dbReference type="PRINTS" id="PR00266">
    <property type="entry name" value="INTERFERONAB"/>
</dbReference>
<dbReference type="SMART" id="SM00076">
    <property type="entry name" value="IFabd"/>
    <property type="match status" value="1"/>
</dbReference>
<dbReference type="SUPFAM" id="SSF47266">
    <property type="entry name" value="4-helical cytokines"/>
    <property type="match status" value="1"/>
</dbReference>
<dbReference type="PROSITE" id="PS00252">
    <property type="entry name" value="INTERFERON_A_B_D"/>
    <property type="match status" value="1"/>
</dbReference>
<feature type="signal peptide" evidence="1">
    <location>
        <begin position="1"/>
        <end position="23"/>
    </location>
</feature>
<feature type="chain" id="PRO_0000016379" description="Interferon alpha-6">
    <location>
        <begin position="24"/>
        <end position="189"/>
    </location>
</feature>
<feature type="glycosylation site" description="N-linked (GlcNAc...) asparagine" evidence="2">
    <location>
        <position position="101"/>
    </location>
</feature>
<feature type="disulfide bond" evidence="1">
    <location>
        <begin position="24"/>
        <end position="122"/>
    </location>
</feature>
<feature type="disulfide bond" evidence="1">
    <location>
        <begin position="52"/>
        <end position="162"/>
    </location>
</feature>
<feature type="sequence conflict" description="In Ref. 2; BAA00349." evidence="2" ref="2">
    <original>T</original>
    <variation>A</variation>
    <location>
        <position position="89"/>
    </location>
</feature>